<organism>
    <name type="scientific">Bluetongue virus 1 (isolate South Africa)</name>
    <name type="common">BTV 1</name>
    <dbReference type="NCBI Taxonomy" id="10905"/>
    <lineage>
        <taxon>Viruses</taxon>
        <taxon>Riboviria</taxon>
        <taxon>Orthornavirae</taxon>
        <taxon>Duplornaviricota</taxon>
        <taxon>Resentoviricetes</taxon>
        <taxon>Reovirales</taxon>
        <taxon>Sedoreoviridae</taxon>
        <taxon>Orbivirus</taxon>
        <taxon>Bluetongue virus</taxon>
    </lineage>
</organism>
<name>VNS1_BTV1S</name>
<feature type="chain" id="PRO_0000222663" description="Non-structural protein NS1">
    <location>
        <begin position="1"/>
        <end position="552"/>
    </location>
</feature>
<dbReference type="PIR" id="B60000">
    <property type="entry name" value="B60000"/>
</dbReference>
<dbReference type="SMR" id="P33472"/>
<dbReference type="InterPro" id="IPR002630">
    <property type="entry name" value="Orbi_NS1"/>
</dbReference>
<dbReference type="Pfam" id="PF01718">
    <property type="entry name" value="Orbi_NS1"/>
    <property type="match status" value="1"/>
</dbReference>
<accession>P33472</accession>
<proteinExistence type="predicted"/>
<gene>
    <name type="primary">Segment-5</name>
</gene>
<sequence length="552" mass="64508">MERFLRKYNISGDYANATRSISAISPQWTCSHLKRNCLFNGMCVKQNFERAMTAATDAEEPAKAYKLVELAKEAMYDRETVWLQCFKSFSQPYEEDVEGKMKRCRVQLLEDYRKSGMMDEAVKQSALVNSERVRLDDSLSAMPYIYVPIKEGQIVNPTFISRYRQIAYYFYNPDAADDWIDPNLFGIRGQHNQIKREVERQINTCLYTGYKGRVFQVMFLPIQLINFLRMDDFAKHFNRYASMTIQQYLRVGYAEEVRYVQQLFGRVPTGEFPLHQMMLIRRDFPTRDRSIVEARVRRSGDENWQSWLLPMIIVREGLDHPDRWEWLIDYMDRKHTCQLCYLKHSKQIPTCGVIDVRASELTGCSPFKTVKIEEHVGNDSVFKTKLVRDEQIGRIGDHYYTTNCYTGAEALITTAIHIHRWIRGCGIWNDEGWQEGIFMLGRVLLRWELTKAQRSALLRLFCFVCYGYAPRADGTIPDWNNLGSFLDIILKGPELSEDEDERAYATMFEMVRCIITLCYAEKVHFAGFAAPACESGEVINLAARMSQMWMEY</sequence>
<reference key="1">
    <citation type="journal article" date="1988" name="Virus Res.">
        <title>Nucleotide and deduced amino acid sequences of the non-structural protein, NS1, of Australian and South African bluetongue virus serotype 1.</title>
        <authorList>
            <person name="Gould A.R."/>
            <person name="Pritchard L.I."/>
            <person name="Tavaria M.D."/>
        </authorList>
    </citation>
    <scope>NUCLEOTIDE SEQUENCE</scope>
</reference>
<organismHost>
    <name type="scientific">Antilocapra americana</name>
    <name type="common">Pronghorn</name>
    <dbReference type="NCBI Taxonomy" id="9891"/>
</organismHost>
<organismHost>
    <name type="scientific">Bos taurus</name>
    <name type="common">Bovine</name>
    <dbReference type="NCBI Taxonomy" id="9913"/>
</organismHost>
<organismHost>
    <name type="scientific">Capra hircus</name>
    <name type="common">Goat</name>
    <dbReference type="NCBI Taxonomy" id="9925"/>
</organismHost>
<organismHost>
    <name type="scientific">Culicoides variipennis</name>
    <name type="common">Biting midge</name>
    <dbReference type="NCBI Taxonomy" id="46212"/>
</organismHost>
<organismHost>
    <name type="scientific">Ovis aries</name>
    <name type="common">Sheep</name>
    <dbReference type="NCBI Taxonomy" id="9940"/>
</organismHost>
<protein>
    <recommendedName>
        <fullName>Non-structural protein NS1</fullName>
    </recommendedName>
</protein>